<gene>
    <name type="primary">UOX</name>
</gene>
<reference key="1">
    <citation type="submission" date="2005-09" db="EMBL/GenBank/DDBJ databases">
        <authorList>
            <consortium name="NIH - Mammalian Gene Collection (MGC) project"/>
        </authorList>
    </citation>
    <scope>NUCLEOTIDE SEQUENCE [LARGE SCALE MRNA]</scope>
    <source>
        <strain>Hereford</strain>
        <tissue>Rumen reticulum</tissue>
    </source>
</reference>
<evidence type="ECO:0000250" key="1"/>
<evidence type="ECO:0000250" key="2">
    <source>
        <dbReference type="UniProtKB" id="D0VWQ1"/>
    </source>
</evidence>
<evidence type="ECO:0000250" key="3">
    <source>
        <dbReference type="UniProtKB" id="P25688"/>
    </source>
</evidence>
<evidence type="ECO:0000250" key="4">
    <source>
        <dbReference type="UniProtKB" id="Q00511"/>
    </source>
</evidence>
<evidence type="ECO:0000255" key="5"/>
<evidence type="ECO:0000305" key="6"/>
<feature type="initiator methionine" description="Removed" evidence="3">
    <location>
        <position position="1"/>
    </location>
</feature>
<feature type="chain" id="PRO_0000165982" description="Uricase">
    <location>
        <begin position="2"/>
        <end position="304"/>
    </location>
</feature>
<feature type="short sequence motif" description="Microbody targeting signal" evidence="5">
    <location>
        <begin position="302"/>
        <end position="304"/>
    </location>
</feature>
<feature type="active site" description="Charge relay system" evidence="2">
    <location>
        <position position="23"/>
    </location>
</feature>
<feature type="active site" description="Charge relay system" evidence="2">
    <location>
        <position position="68"/>
    </location>
</feature>
<feature type="active site" description="Charge relay system" evidence="2">
    <location>
        <position position="264"/>
    </location>
</feature>
<feature type="binding site" evidence="4">
    <location>
        <position position="68"/>
    </location>
    <ligand>
        <name>urate</name>
        <dbReference type="ChEBI" id="CHEBI:17775"/>
    </ligand>
</feature>
<feature type="binding site" evidence="4">
    <location>
        <position position="69"/>
    </location>
    <ligand>
        <name>urate</name>
        <dbReference type="ChEBI" id="CHEBI:17775"/>
    </ligand>
</feature>
<feature type="binding site" evidence="4">
    <location>
        <position position="170"/>
    </location>
    <ligand>
        <name>urate</name>
        <dbReference type="ChEBI" id="CHEBI:17775"/>
    </ligand>
</feature>
<feature type="binding site" evidence="4">
    <location>
        <position position="187"/>
    </location>
    <ligand>
        <name>urate</name>
        <dbReference type="ChEBI" id="CHEBI:17775"/>
    </ligand>
</feature>
<feature type="binding site" evidence="4">
    <location>
        <position position="235"/>
    </location>
    <ligand>
        <name>urate</name>
        <dbReference type="ChEBI" id="CHEBI:17775"/>
    </ligand>
</feature>
<feature type="binding site" evidence="4">
    <location>
        <position position="236"/>
    </location>
    <ligand>
        <name>urate</name>
        <dbReference type="ChEBI" id="CHEBI:17775"/>
    </ligand>
</feature>
<feature type="binding site" evidence="4">
    <location>
        <position position="262"/>
    </location>
    <ligand>
        <name>urate</name>
        <dbReference type="ChEBI" id="CHEBI:17775"/>
    </ligand>
</feature>
<feature type="modified residue" description="N-acetylalanine" evidence="3">
    <location>
        <position position="2"/>
    </location>
</feature>
<feature type="modified residue" description="N6-acetyllysine; alternate" evidence="3">
    <location>
        <position position="10"/>
    </location>
</feature>
<feature type="modified residue" description="N6-succinyllysine; alternate" evidence="3">
    <location>
        <position position="10"/>
    </location>
</feature>
<feature type="modified residue" description="N6-acetyllysine; alternate" evidence="3">
    <location>
        <position position="23"/>
    </location>
</feature>
<feature type="modified residue" description="N6-succinyllysine; alternate" evidence="3">
    <location>
        <position position="23"/>
    </location>
</feature>
<feature type="modified residue" description="N6-acetyllysine" evidence="3">
    <location>
        <position position="27"/>
    </location>
</feature>
<feature type="modified residue" description="N6-acetyllysine" evidence="3">
    <location>
        <position position="36"/>
    </location>
</feature>
<feature type="modified residue" description="Phosphoserine" evidence="3">
    <location>
        <position position="39"/>
    </location>
</feature>
<feature type="modified residue" description="Phosphoserine" evidence="3">
    <location>
        <position position="63"/>
    </location>
</feature>
<feature type="modified residue" description="N6-acetyllysine" evidence="3">
    <location>
        <position position="118"/>
    </location>
</feature>
<feature type="modified residue" description="N6-acetyllysine" evidence="3">
    <location>
        <position position="122"/>
    </location>
</feature>
<feature type="modified residue" description="N6-acetyllysine" evidence="3">
    <location>
        <position position="164"/>
    </location>
</feature>
<feature type="modified residue" description="N6-acetyllysine" evidence="3">
    <location>
        <position position="175"/>
    </location>
</feature>
<feature type="modified residue" description="N6-acetyllysine" evidence="3">
    <location>
        <position position="185"/>
    </location>
</feature>
<feature type="modified residue" description="N6-acetyllysine; alternate" evidence="3">
    <location>
        <position position="221"/>
    </location>
</feature>
<feature type="modified residue" description="N6-succinyllysine; alternate" evidence="3">
    <location>
        <position position="221"/>
    </location>
</feature>
<feature type="modified residue" description="N6-acetyllysine; alternate" evidence="3">
    <location>
        <position position="228"/>
    </location>
</feature>
<feature type="modified residue" description="N6-succinyllysine; alternate" evidence="3">
    <location>
        <position position="228"/>
    </location>
</feature>
<feature type="modified residue" description="Phosphoserine" evidence="3">
    <location>
        <position position="232"/>
    </location>
</feature>
<feature type="modified residue" description="N6-acetyllysine" evidence="3">
    <location>
        <position position="278"/>
    </location>
</feature>
<feature type="modified residue" description="Phosphotyrosine" evidence="3">
    <location>
        <position position="289"/>
    </location>
</feature>
<keyword id="KW-0007">Acetylation</keyword>
<keyword id="KW-0560">Oxidoreductase</keyword>
<keyword id="KW-0576">Peroxisome</keyword>
<keyword id="KW-0597">Phosphoprotein</keyword>
<keyword id="KW-0659">Purine metabolism</keyword>
<keyword id="KW-1185">Reference proteome</keyword>
<protein>
    <recommendedName>
        <fullName>Uricase</fullName>
        <ecNumber>1.7.3.3</ecNumber>
    </recommendedName>
    <alternativeName>
        <fullName>Urate oxidase</fullName>
    </alternativeName>
</protein>
<name>URIC_BOVIN</name>
<organism>
    <name type="scientific">Bos taurus</name>
    <name type="common">Bovine</name>
    <dbReference type="NCBI Taxonomy" id="9913"/>
    <lineage>
        <taxon>Eukaryota</taxon>
        <taxon>Metazoa</taxon>
        <taxon>Chordata</taxon>
        <taxon>Craniata</taxon>
        <taxon>Vertebrata</taxon>
        <taxon>Euteleostomi</taxon>
        <taxon>Mammalia</taxon>
        <taxon>Eutheria</taxon>
        <taxon>Laurasiatheria</taxon>
        <taxon>Artiodactyla</taxon>
        <taxon>Ruminantia</taxon>
        <taxon>Pecora</taxon>
        <taxon>Bovidae</taxon>
        <taxon>Bovinae</taxon>
        <taxon>Bos</taxon>
    </lineage>
</organism>
<sequence length="304" mass="35124">MAHYHNDYQKNDEVEFVRTGYGKDMVKVLHIQRDGKYHSIKEVATSVQLTLNSRREYLHGDNSDIIPTDTIKNTVQVLAKFKGIKSIETFAMNICEHFLSSFNHVIRVQVYVEEVPWKRFEKNGVKHVHAFIHTPTGTHFCEVEQLRSGPPVIHSGIKDLKVLKTTQSGFEGFLKDQFTTLPEVKDRCFATQVYCKWRYHQGRDVDFEATWEAVRGIVLKKFAGPYDKGEYSPSVQKTLYDIQVLSLSQLPEIEDMEISLPNIHYFNIDMSKMGLINKEEVLLPLDNPYGRITGTVKRKLTSRL</sequence>
<proteinExistence type="evidence at transcript level"/>
<dbReference type="EC" id="1.7.3.3"/>
<dbReference type="EMBL" id="BC105244">
    <property type="protein sequence ID" value="AAI05245.1"/>
    <property type="molecule type" value="mRNA"/>
</dbReference>
<dbReference type="RefSeq" id="NP_001069116.1">
    <property type="nucleotide sequence ID" value="NM_001075648.2"/>
</dbReference>
<dbReference type="SMR" id="Q3MHG7"/>
<dbReference type="FunCoup" id="Q3MHG7">
    <property type="interactions" value="636"/>
</dbReference>
<dbReference type="STRING" id="9913.ENSBTAP00000033405"/>
<dbReference type="PaxDb" id="9913-ENSBTAP00000033405"/>
<dbReference type="PeptideAtlas" id="Q3MHG7"/>
<dbReference type="GeneID" id="514113"/>
<dbReference type="KEGG" id="bta:514113"/>
<dbReference type="CTD" id="391051"/>
<dbReference type="eggNOG" id="KOG1599">
    <property type="taxonomic scope" value="Eukaryota"/>
</dbReference>
<dbReference type="HOGENOM" id="CLU_048151_1_0_1"/>
<dbReference type="InParanoid" id="Q3MHG7"/>
<dbReference type="OrthoDB" id="9992118at2759"/>
<dbReference type="TreeFam" id="TF323438"/>
<dbReference type="UniPathway" id="UPA00394">
    <property type="reaction ID" value="UER00650"/>
</dbReference>
<dbReference type="Proteomes" id="UP000009136">
    <property type="component" value="Unplaced"/>
</dbReference>
<dbReference type="GO" id="GO:0005777">
    <property type="term" value="C:peroxisome"/>
    <property type="evidence" value="ECO:0000318"/>
    <property type="project" value="GO_Central"/>
</dbReference>
<dbReference type="GO" id="GO:0004846">
    <property type="term" value="F:urate oxidase activity"/>
    <property type="evidence" value="ECO:0000318"/>
    <property type="project" value="GO_Central"/>
</dbReference>
<dbReference type="GO" id="GO:0006145">
    <property type="term" value="P:purine nucleobase catabolic process"/>
    <property type="evidence" value="ECO:0000318"/>
    <property type="project" value="GO_Central"/>
</dbReference>
<dbReference type="GO" id="GO:0019628">
    <property type="term" value="P:urate catabolic process"/>
    <property type="evidence" value="ECO:0000318"/>
    <property type="project" value="GO_Central"/>
</dbReference>
<dbReference type="CDD" id="cd00445">
    <property type="entry name" value="Uricase"/>
    <property type="match status" value="1"/>
</dbReference>
<dbReference type="FunFam" id="3.10.270.10:FF:000001">
    <property type="entry name" value="Uricase"/>
    <property type="match status" value="1"/>
</dbReference>
<dbReference type="Gene3D" id="3.10.270.10">
    <property type="entry name" value="Urate Oxidase"/>
    <property type="match status" value="1"/>
</dbReference>
<dbReference type="InterPro" id="IPR002042">
    <property type="entry name" value="Uricase"/>
</dbReference>
<dbReference type="InterPro" id="IPR019842">
    <property type="entry name" value="Uricase_CS"/>
</dbReference>
<dbReference type="NCBIfam" id="TIGR03383">
    <property type="entry name" value="urate_oxi"/>
    <property type="match status" value="1"/>
</dbReference>
<dbReference type="PANTHER" id="PTHR42874">
    <property type="entry name" value="URICASE"/>
    <property type="match status" value="1"/>
</dbReference>
<dbReference type="PANTHER" id="PTHR42874:SF1">
    <property type="entry name" value="URICASE"/>
    <property type="match status" value="1"/>
</dbReference>
<dbReference type="Pfam" id="PF01014">
    <property type="entry name" value="Uricase"/>
    <property type="match status" value="2"/>
</dbReference>
<dbReference type="PIRSF" id="PIRSF000241">
    <property type="entry name" value="Urate_oxidase"/>
    <property type="match status" value="1"/>
</dbReference>
<dbReference type="PRINTS" id="PR00093">
    <property type="entry name" value="URICASE"/>
</dbReference>
<dbReference type="SUPFAM" id="SSF55620">
    <property type="entry name" value="Tetrahydrobiopterin biosynthesis enzymes-like"/>
    <property type="match status" value="2"/>
</dbReference>
<dbReference type="PROSITE" id="PS00366">
    <property type="entry name" value="URICASE"/>
    <property type="match status" value="1"/>
</dbReference>
<comment type="function">
    <text evidence="1">Catalyzes the oxidation of uric acid to 5-hydroxyisourate, which is further processed to form (S)-allantoin.</text>
</comment>
<comment type="catalytic activity">
    <reaction>
        <text>urate + O2 + H2O = 5-hydroxyisourate + H2O2</text>
        <dbReference type="Rhea" id="RHEA:21368"/>
        <dbReference type="ChEBI" id="CHEBI:15377"/>
        <dbReference type="ChEBI" id="CHEBI:15379"/>
        <dbReference type="ChEBI" id="CHEBI:16240"/>
        <dbReference type="ChEBI" id="CHEBI:17775"/>
        <dbReference type="ChEBI" id="CHEBI:18072"/>
        <dbReference type="EC" id="1.7.3.3"/>
    </reaction>
</comment>
<comment type="pathway">
    <text>Purine metabolism; urate degradation; (S)-allantoin from urate: step 1/3.</text>
</comment>
<comment type="subunit">
    <text evidence="1">Homotetramer.</text>
</comment>
<comment type="subcellular location">
    <subcellularLocation>
        <location evidence="1">Peroxisome</location>
    </subcellularLocation>
</comment>
<comment type="similarity">
    <text evidence="6">Belongs to the uricase family.</text>
</comment>
<accession>Q3MHG7</accession>